<evidence type="ECO:0000269" key="1">
    <source ref="4"/>
</evidence>
<evidence type="ECO:0000305" key="2"/>
<feature type="signal peptide" evidence="1">
    <location>
        <begin position="1"/>
        <end position="24"/>
    </location>
</feature>
<feature type="chain" id="PRO_0000014347" description="Alpha-amylase/trypsin inhibitor CM16">
    <location>
        <begin position="25"/>
        <end position="143"/>
    </location>
</feature>
<organism>
    <name type="scientific">Triticum aestivum</name>
    <name type="common">Wheat</name>
    <dbReference type="NCBI Taxonomy" id="4565"/>
    <lineage>
        <taxon>Eukaryota</taxon>
        <taxon>Viridiplantae</taxon>
        <taxon>Streptophyta</taxon>
        <taxon>Embryophyta</taxon>
        <taxon>Tracheophyta</taxon>
        <taxon>Spermatophyta</taxon>
        <taxon>Magnoliopsida</taxon>
        <taxon>Liliopsida</taxon>
        <taxon>Poales</taxon>
        <taxon>Poaceae</taxon>
        <taxon>BOP clade</taxon>
        <taxon>Pooideae</taxon>
        <taxon>Triticodae</taxon>
        <taxon>Triticeae</taxon>
        <taxon>Triticinae</taxon>
        <taxon>Triticum</taxon>
    </lineage>
</organism>
<keyword id="KW-0022">Alpha-amylase inhibitor</keyword>
<keyword id="KW-0903">Direct protein sequencing</keyword>
<keyword id="KW-1015">Disulfide bond</keyword>
<keyword id="KW-0646">Protease inhibitor</keyword>
<keyword id="KW-1185">Reference proteome</keyword>
<keyword id="KW-0964">Secreted</keyword>
<keyword id="KW-0722">Serine protease inhibitor</keyword>
<keyword id="KW-0732">Signal</keyword>
<accession>P16159</accession>
<comment type="function">
    <text>Alpha-amylase/trypsin inhibitor. It could be involved in insect defense mechanisms.</text>
</comment>
<comment type="subunit">
    <text>Subunit of the tetrameric inhibitor.</text>
</comment>
<comment type="subcellular location">
    <subcellularLocation>
        <location>Secreted</location>
    </subcellularLocation>
</comment>
<comment type="tissue specificity">
    <text>Developing endosperm.</text>
</comment>
<comment type="PTM">
    <text evidence="2">Five disulfide bonds, which are essential for the inhibitor activity, are probably present.</text>
</comment>
<comment type="miscellaneous">
    <text>CM proteins would be involved in the cooking quality of pasta.</text>
</comment>
<comment type="similarity">
    <text evidence="2">Belongs to the protease inhibitor I6 (cereal trypsin/alpha-amylase inhibitor) family.</text>
</comment>
<proteinExistence type="evidence at protein level"/>
<reference key="1">
    <citation type="journal article" date="1990" name="Plant Mol. Biol.">
        <title>Cloning and characterization of a cDNA encoding the wheat (Triticum durum Desf.) CM16 protein.</title>
        <authorList>
            <person name="Gautier M.-F."/>
            <person name="Alary R."/>
            <person name="Joudrier P."/>
        </authorList>
    </citation>
    <scope>NUCLEOTIDE SEQUENCE [MRNA]</scope>
    <source>
        <strain>cv. Agathe</strain>
        <tissue>Seed</tissue>
    </source>
</reference>
<reference key="2">
    <citation type="journal article" date="1990" name="Plant Mol. Biol.">
        <title>Cloning of cDNA and chromosomal location of genes encoding the three types of subunits of the wheat tetrameric inhibitor of insect alpha-amylase.</title>
        <authorList>
            <person name="Garcia-Maroto F."/>
            <person name="Marana C."/>
            <person name="Mena M."/>
            <person name="Garcia-Olmedo F."/>
            <person name="Carbonero P."/>
        </authorList>
    </citation>
    <scope>NUCLEOTIDE SEQUENCE [MRNA]</scope>
    <source>
        <strain>cv. Chinese Spring</strain>
        <tissue>Endosperm</tissue>
    </source>
</reference>
<reference key="3">
    <citation type="journal article" date="1991" name="Plant Mol. Biol.">
        <title>Characterization of a cDNA clone encoding the Triticum aestivum L. CM16 protein: homology with the Triticum durum Desf. sequence.</title>
        <authorList>
            <person name="Lullien V."/>
            <person name="Alary R."/>
            <person name="Joudrier P."/>
            <person name="Gautier M.-F."/>
        </authorList>
    </citation>
    <scope>NUCLEOTIDE SEQUENCE [MRNA]</scope>
    <source>
        <strain>cv. Timgalen</strain>
        <tissue>Seed</tissue>
    </source>
</reference>
<reference key="4">
    <citation type="journal article" date="1986" name="Biochim. Biophys. Acta">
        <title>Evolutionary implications of sequential homologies among members of the trypsin / alpha-amylase inhibitor family (CM-proteins) in wheat and barley.</title>
        <authorList>
            <person name="Barber D."/>
            <person name="Sanchez-Monge R."/>
            <person name="Garcia-Olmedo F."/>
            <person name="Salcedo G."/>
            <person name="Mendez E."/>
        </authorList>
    </citation>
    <scope>PROTEIN SEQUENCE OF 25-53</scope>
</reference>
<protein>
    <recommendedName>
        <fullName>Alpha-amylase/trypsin inhibitor CM16</fullName>
    </recommendedName>
    <alternativeName>
        <fullName>Chloroform/methanol-soluble protein CM16</fullName>
    </alternativeName>
</protein>
<name>IAC16_WHEAT</name>
<sequence>MASKSNCVLLLAAVLVSIFAAVAAIGNEDCTPWMSTLITPLPSCRDYVEQQACRIETPGSPYLAKQQCCGELANIPQQCRCQALRYFMGPKSRPDQSGLMELPGCPREVQMDFVRILVTPGYCNLTTVHNTPYCLAMEESQWS</sequence>
<dbReference type="EMBL" id="X16733">
    <property type="protein sequence ID" value="CAA34709.1"/>
    <property type="molecule type" value="mRNA"/>
</dbReference>
<dbReference type="EMBL" id="X17573">
    <property type="protein sequence ID" value="CAA35596.1"/>
    <property type="molecule type" value="mRNA"/>
</dbReference>
<dbReference type="EMBL" id="X55455">
    <property type="protein sequence ID" value="CAA39100.1"/>
    <property type="molecule type" value="mRNA"/>
</dbReference>
<dbReference type="PIR" id="C25310">
    <property type="entry name" value="C25310"/>
</dbReference>
<dbReference type="PIR" id="S13384">
    <property type="entry name" value="S13384"/>
</dbReference>
<dbReference type="RefSeq" id="NP_001392683.1">
    <property type="nucleotide sequence ID" value="NM_001405754.1"/>
</dbReference>
<dbReference type="SMR" id="P16159"/>
<dbReference type="STRING" id="4565.P16159"/>
<dbReference type="Allergome" id="8777">
    <property type="allergen name" value="Tri a 40"/>
</dbReference>
<dbReference type="MEROPS" id="I06.004"/>
<dbReference type="PaxDb" id="4565-Traes_4BL_B12EAE358.1"/>
<dbReference type="EnsemblPlants" id="TraesARI4B03G02424420.1">
    <property type="protein sequence ID" value="TraesARI4B03G02424420.1.CDS1"/>
    <property type="gene ID" value="TraesARI4B03G02424420"/>
</dbReference>
<dbReference type="EnsemblPlants" id="TraesCAD_scaffold_059374_01G000100.1">
    <property type="protein sequence ID" value="TraesCAD_scaffold_059374_01G000100.1"/>
    <property type="gene ID" value="TraesCAD_scaffold_059374_01G000100"/>
</dbReference>
<dbReference type="EnsemblPlants" id="TraesCLE_scaffold_030329_01G000200.1">
    <property type="protein sequence ID" value="TraesCLE_scaffold_030329_01G000200.1"/>
    <property type="gene ID" value="TraesCLE_scaffold_030329_01G000200"/>
</dbReference>
<dbReference type="EnsemblPlants" id="TraesCS4B02G328000.1">
    <property type="protein sequence ID" value="TraesCS4B02G328000.1.cds1"/>
    <property type="gene ID" value="TraesCS4B02G328000"/>
</dbReference>
<dbReference type="EnsemblPlants" id="TraesCS4B03G0849000.1">
    <property type="protein sequence ID" value="TraesCS4B03G0849000.1.CDS1"/>
    <property type="gene ID" value="TraesCS4B03G0849000"/>
</dbReference>
<dbReference type="EnsemblPlants" id="TraesJAG4B03G02385220.1">
    <property type="protein sequence ID" value="TraesJAG4B03G02385220.1.CDS1"/>
    <property type="gene ID" value="TraesJAG4B03G02385220"/>
</dbReference>
<dbReference type="EnsemblPlants" id="TraesJUL4B03G02406400.1">
    <property type="protein sequence ID" value="TraesJUL4B03G02406400.1.CDS1"/>
    <property type="gene ID" value="TraesJUL4B03G02406400"/>
</dbReference>
<dbReference type="EnsemblPlants" id="TraesKAR4B01G0414240.1">
    <property type="protein sequence ID" value="cds.TraesKAR4B01G0414240.1"/>
    <property type="gene ID" value="TraesKAR4B01G0414240"/>
</dbReference>
<dbReference type="EnsemblPlants" id="TraesLAC4B03G02340460.1">
    <property type="protein sequence ID" value="TraesLAC4B03G02340460.1.CDS1"/>
    <property type="gene ID" value="TraesLAC4B03G02340460"/>
</dbReference>
<dbReference type="EnsemblPlants" id="TraesLDM4B03G02388380.1">
    <property type="protein sequence ID" value="TraesLDM4B03G02388380.1.CDS1"/>
    <property type="gene ID" value="TraesLDM4B03G02388380"/>
</dbReference>
<dbReference type="EnsemblPlants" id="TraesMAC4B03G02386220.1">
    <property type="protein sequence ID" value="TraesMAC4B03G02386220.1.CDS1"/>
    <property type="gene ID" value="TraesMAC4B03G02386220"/>
</dbReference>
<dbReference type="EnsemblPlants" id="TraesNOR4B03G02405160.1">
    <property type="protein sequence ID" value="TraesNOR4B03G02405160.1.CDS1"/>
    <property type="gene ID" value="TraesNOR4B03G02405160"/>
</dbReference>
<dbReference type="EnsemblPlants" id="TraesPARA_EIv1.0_1391140.1">
    <property type="protein sequence ID" value="TraesPARA_EIv1.0_1391140.1.CDS1"/>
    <property type="gene ID" value="TraesPARA_EIv1.0_1391140"/>
</dbReference>
<dbReference type="EnsemblPlants" id="TraesRN4B0100879100.1">
    <property type="protein sequence ID" value="TraesRN4B0100879100.1"/>
    <property type="gene ID" value="TraesRN4B0100879100"/>
</dbReference>
<dbReference type="EnsemblPlants" id="TraesROB_scaffold_059406_01G000200.1">
    <property type="protein sequence ID" value="TraesROB_scaffold_059406_01G000200.1"/>
    <property type="gene ID" value="TraesROB_scaffold_059406_01G000200"/>
</dbReference>
<dbReference type="EnsemblPlants" id="TraesSTA4B03G02381900.1">
    <property type="protein sequence ID" value="TraesSTA4B03G02381900.1.CDS1"/>
    <property type="gene ID" value="TraesSTA4B03G02381900"/>
</dbReference>
<dbReference type="EnsemblPlants" id="TraesSYM4B03G02414250.1">
    <property type="protein sequence ID" value="TraesSYM4B03G02414250.1.CDS1"/>
    <property type="gene ID" value="TraesSYM4B03G02414250"/>
</dbReference>
<dbReference type="EnsemblPlants" id="TraesWEE_scaffold_013736_01G000400.1">
    <property type="protein sequence ID" value="TraesWEE_scaffold_013736_01G000400.1"/>
    <property type="gene ID" value="TraesWEE_scaffold_013736_01G000400"/>
</dbReference>
<dbReference type="GeneID" id="543286"/>
<dbReference type="Gramene" id="TraesARI4B03G02424420.1">
    <property type="protein sequence ID" value="TraesARI4B03G02424420.1.CDS1"/>
    <property type="gene ID" value="TraesARI4B03G02424420"/>
</dbReference>
<dbReference type="Gramene" id="TraesCAD_scaffold_059374_01G000100.1">
    <property type="protein sequence ID" value="TraesCAD_scaffold_059374_01G000100.1"/>
    <property type="gene ID" value="TraesCAD_scaffold_059374_01G000100"/>
</dbReference>
<dbReference type="Gramene" id="TraesCLE_scaffold_030329_01G000200.1">
    <property type="protein sequence ID" value="TraesCLE_scaffold_030329_01G000200.1"/>
    <property type="gene ID" value="TraesCLE_scaffold_030329_01G000200"/>
</dbReference>
<dbReference type="Gramene" id="TraesCS4B02G328000.1">
    <property type="protein sequence ID" value="TraesCS4B02G328000.1.cds1"/>
    <property type="gene ID" value="TraesCS4B02G328000"/>
</dbReference>
<dbReference type="Gramene" id="TraesCS4B03G0849000.1">
    <property type="protein sequence ID" value="TraesCS4B03G0849000.1.CDS1"/>
    <property type="gene ID" value="TraesCS4B03G0849000"/>
</dbReference>
<dbReference type="Gramene" id="TraesJAG4B03G02385220.1">
    <property type="protein sequence ID" value="TraesJAG4B03G02385220.1.CDS1"/>
    <property type="gene ID" value="TraesJAG4B03G02385220"/>
</dbReference>
<dbReference type="Gramene" id="TraesJUL4B03G02406400.1">
    <property type="protein sequence ID" value="TraesJUL4B03G02406400.1.CDS1"/>
    <property type="gene ID" value="TraesJUL4B03G02406400"/>
</dbReference>
<dbReference type="Gramene" id="TraesKAR4B01G0414240.1">
    <property type="protein sequence ID" value="cds.TraesKAR4B01G0414240.1"/>
    <property type="gene ID" value="TraesKAR4B01G0414240"/>
</dbReference>
<dbReference type="Gramene" id="TraesLAC4B03G02340460.1">
    <property type="protein sequence ID" value="TraesLAC4B03G02340460.1.CDS1"/>
    <property type="gene ID" value="TraesLAC4B03G02340460"/>
</dbReference>
<dbReference type="Gramene" id="TraesLDM4B03G02388380.1">
    <property type="protein sequence ID" value="TraesLDM4B03G02388380.1.CDS1"/>
    <property type="gene ID" value="TraesLDM4B03G02388380"/>
</dbReference>
<dbReference type="Gramene" id="TraesMAC4B03G02386220.1">
    <property type="protein sequence ID" value="TraesMAC4B03G02386220.1.CDS1"/>
    <property type="gene ID" value="TraesMAC4B03G02386220"/>
</dbReference>
<dbReference type="Gramene" id="TraesNOR4B03G02405160.1">
    <property type="protein sequence ID" value="TraesNOR4B03G02405160.1.CDS1"/>
    <property type="gene ID" value="TraesNOR4B03G02405160"/>
</dbReference>
<dbReference type="Gramene" id="TraesPARA_EIv1.0_1391140.1">
    <property type="protein sequence ID" value="TraesPARA_EIv1.0_1391140.1.CDS1"/>
    <property type="gene ID" value="TraesPARA_EIv1.0_1391140"/>
</dbReference>
<dbReference type="Gramene" id="TraesRN4B0100879100.1">
    <property type="protein sequence ID" value="TraesRN4B0100879100.1"/>
    <property type="gene ID" value="TraesRN4B0100879100"/>
</dbReference>
<dbReference type="Gramene" id="TraesROB_scaffold_059406_01G000200.1">
    <property type="protein sequence ID" value="TraesROB_scaffold_059406_01G000200.1"/>
    <property type="gene ID" value="TraesROB_scaffold_059406_01G000200"/>
</dbReference>
<dbReference type="Gramene" id="TraesSTA4B03G02381900.1">
    <property type="protein sequence ID" value="TraesSTA4B03G02381900.1.CDS1"/>
    <property type="gene ID" value="TraesSTA4B03G02381900"/>
</dbReference>
<dbReference type="Gramene" id="TraesSYM4B03G02414250.1">
    <property type="protein sequence ID" value="TraesSYM4B03G02414250.1.CDS1"/>
    <property type="gene ID" value="TraesSYM4B03G02414250"/>
</dbReference>
<dbReference type="Gramene" id="TraesWEE_scaffold_013736_01G000400.1">
    <property type="protein sequence ID" value="TraesWEE_scaffold_013736_01G000400.1"/>
    <property type="gene ID" value="TraesWEE_scaffold_013736_01G000400"/>
</dbReference>
<dbReference type="HOGENOM" id="CLU_113497_1_1_1"/>
<dbReference type="OMA" id="ACCTSCL"/>
<dbReference type="OrthoDB" id="656731at2759"/>
<dbReference type="Proteomes" id="UP000019116">
    <property type="component" value="Chromosome 4B"/>
</dbReference>
<dbReference type="ExpressionAtlas" id="P16159">
    <property type="expression patterns" value="baseline and differential"/>
</dbReference>
<dbReference type="GO" id="GO:0005576">
    <property type="term" value="C:extracellular region"/>
    <property type="evidence" value="ECO:0007669"/>
    <property type="project" value="UniProtKB-SubCell"/>
</dbReference>
<dbReference type="GO" id="GO:0015066">
    <property type="term" value="F:alpha-amylase inhibitor activity"/>
    <property type="evidence" value="ECO:0007669"/>
    <property type="project" value="UniProtKB-KW"/>
</dbReference>
<dbReference type="GO" id="GO:0004867">
    <property type="term" value="F:serine-type endopeptidase inhibitor activity"/>
    <property type="evidence" value="ECO:0007669"/>
    <property type="project" value="UniProtKB-KW"/>
</dbReference>
<dbReference type="CDD" id="cd00261">
    <property type="entry name" value="AAI_SS"/>
    <property type="match status" value="1"/>
</dbReference>
<dbReference type="Gene3D" id="1.10.110.10">
    <property type="entry name" value="Plant lipid-transfer and hydrophobic proteins"/>
    <property type="match status" value="1"/>
</dbReference>
<dbReference type="InterPro" id="IPR006106">
    <property type="entry name" value="Allergen/soft/tryp_amyl_inhib"/>
</dbReference>
<dbReference type="InterPro" id="IPR006105">
    <property type="entry name" value="Allergen/tryp_amyl_inhib_CS"/>
</dbReference>
<dbReference type="InterPro" id="IPR036312">
    <property type="entry name" value="Bifun_inhib/LTP/seed_sf"/>
</dbReference>
<dbReference type="InterPro" id="IPR016140">
    <property type="entry name" value="Bifunc_inhib/LTP/seed_store"/>
</dbReference>
<dbReference type="PANTHER" id="PTHR34481:SF7">
    <property type="entry name" value="ALPHA-AMYLASE_TRYPSIN INHIBITOR CM16"/>
    <property type="match status" value="1"/>
</dbReference>
<dbReference type="PANTHER" id="PTHR34481">
    <property type="entry name" value="TRYPSIN/FACTOR XIIA INHIBITOR-RELATED"/>
    <property type="match status" value="1"/>
</dbReference>
<dbReference type="Pfam" id="PF00234">
    <property type="entry name" value="Tryp_alpha_amyl"/>
    <property type="match status" value="1"/>
</dbReference>
<dbReference type="PRINTS" id="PR00808">
    <property type="entry name" value="AMLASEINHBTR"/>
</dbReference>
<dbReference type="SMART" id="SM00499">
    <property type="entry name" value="AAI"/>
    <property type="match status" value="1"/>
</dbReference>
<dbReference type="SUPFAM" id="SSF47699">
    <property type="entry name" value="Bifunctional inhibitor/lipid-transfer protein/seed storage 2S albumin"/>
    <property type="match status" value="1"/>
</dbReference>
<dbReference type="PROSITE" id="PS00426">
    <property type="entry name" value="CEREAL_TRYP_AMYL_INH"/>
    <property type="match status" value="1"/>
</dbReference>